<name>TIE1_MOUSE</name>
<sequence>MVWWGSSLLLPTLFLASHVGASVDLTLLANLRITDPQRFFLTCVSGEAGAGRSSDPPLLLEKDDRIVRTFPPGQPLYLARNGSHQVTLRGFSKPSDLVGVFSCVGGAGARRTRVLYVHNSPGAHLFPDKVTHTVNKGDTAVLSAHVHKEKQTDVIWKNNGSYFNTLDWQEADDGRFQLQLQNVQPPSSGIYSATYLEASPLGSAFFRLIVRGCGAGRWGPGCVKDCPGCLHGGVCHDHDGECVCPPGFTGTRCEQACREGRFGQSCQEQCPGTAGCRGLTFCLPDPYGCSCGSGWRGSQCQEACAPGHFGADCRLQCQCQNGGTCDRFSGCVCPSGWHGVHCEKSDRIPQILSMATEVEFNIGTMPRINCAAAGNPFPVRGSMKLRKPDGTMLLSTKVIVEPDRTTAEFEVPSLTLGDSGFWECRVSTSGGQDSRRFKVNVKVPPVPLTAPRLLAKQSRQLVVSPLVSFSGDGPISSVRLHYRPQDSTIAWSAIVVDPSENVTLMNLKPKTGYNVRVQLSRPGEGGEGGWGPSALMTTDCPEPLLQPWLESWHVEGPDRLRVSWSLPSVPLSGDGFLLRLWDGARGQERRENISFPQARTALLTGLTPGTHYQLDVRLYHCTLLGPASPPAHVHLPPSGPPAPRHLHAQALSDSEIQLMWQHPEAPSGPISKYIVEIQVAGGSGDPQWMDVDRPEETSIIVRGLNASTRYLFRVRASVQGLGDWSNTVEEATLGNGLQSEGPVRESRAAEEGLDQQLVLAVVGSVSATCLTILAALLALVCIRRSCLHRRRTFTYQSGSGEETILQFSSGTLTLTRRPKPQPEPLSYPVLEWEDITFEDLIGEGNFGQVIRAMIKKDGLKMNAAIKMLKEYASENDHRDFAGELEVLCKLGHHPNIINLLGACENRGYLYIAIEYAPYGNLLDFLRKSRVLETDPAFAREHGTASTLSSRQLLRFASDAANGMQYLSEKQFIHRDLAARNVLVGENLASKIADFGLSRGEEVYVKKTMGRLPVRWMAIESLNYSVYTTKSDVWSFGVLLWEIVSLGGTPYCGMTCAELYEKLPQGYRMEQPRNCDDEVYELMRQCWRDRPYERPPFAQIALQLGRMLEARKAYVNMSLFENFTYAGIDATAEEA</sequence>
<organism>
    <name type="scientific">Mus musculus</name>
    <name type="common">Mouse</name>
    <dbReference type="NCBI Taxonomy" id="10090"/>
    <lineage>
        <taxon>Eukaryota</taxon>
        <taxon>Metazoa</taxon>
        <taxon>Chordata</taxon>
        <taxon>Craniata</taxon>
        <taxon>Vertebrata</taxon>
        <taxon>Euteleostomi</taxon>
        <taxon>Mammalia</taxon>
        <taxon>Eutheria</taxon>
        <taxon>Euarchontoglires</taxon>
        <taxon>Glires</taxon>
        <taxon>Rodentia</taxon>
        <taxon>Myomorpha</taxon>
        <taxon>Muroidea</taxon>
        <taxon>Muridae</taxon>
        <taxon>Murinae</taxon>
        <taxon>Mus</taxon>
        <taxon>Mus</taxon>
    </lineage>
</organism>
<evidence type="ECO:0000250" key="1"/>
<evidence type="ECO:0000250" key="2">
    <source>
        <dbReference type="UniProtKB" id="P35590"/>
    </source>
</evidence>
<evidence type="ECO:0000255" key="3"/>
<evidence type="ECO:0000255" key="4">
    <source>
        <dbReference type="PROSITE-ProRule" id="PRU00076"/>
    </source>
</evidence>
<evidence type="ECO:0000255" key="5">
    <source>
        <dbReference type="PROSITE-ProRule" id="PRU00159"/>
    </source>
</evidence>
<evidence type="ECO:0000255" key="6">
    <source>
        <dbReference type="PROSITE-ProRule" id="PRU00316"/>
    </source>
</evidence>
<evidence type="ECO:0000255" key="7">
    <source>
        <dbReference type="PROSITE-ProRule" id="PRU10028"/>
    </source>
</evidence>
<evidence type="ECO:0000269" key="8">
    <source>
    </source>
</evidence>
<evidence type="ECO:0000269" key="9">
    <source>
    </source>
</evidence>
<evidence type="ECO:0000269" key="10">
    <source>
    </source>
</evidence>
<evidence type="ECO:0000305" key="11"/>
<feature type="signal peptide">
    <location>
        <begin position="1"/>
        <end position="22"/>
    </location>
</feature>
<feature type="chain" id="PRO_0000024472" description="Tyrosine-protein kinase receptor Tie-1">
    <location>
        <begin position="23"/>
        <end position="1134"/>
    </location>
</feature>
<feature type="topological domain" description="Extracellular" evidence="3">
    <location>
        <begin position="23"/>
        <end position="755"/>
    </location>
</feature>
<feature type="transmembrane region" description="Helical" evidence="3">
    <location>
        <begin position="756"/>
        <end position="780"/>
    </location>
</feature>
<feature type="topological domain" description="Cytoplasmic" evidence="3">
    <location>
        <begin position="781"/>
        <end position="1134"/>
    </location>
</feature>
<feature type="domain" description="Ig-like C2-type 1">
    <location>
        <begin position="43"/>
        <end position="123"/>
    </location>
</feature>
<feature type="domain" description="EGF-like 1" evidence="4">
    <location>
        <begin position="212"/>
        <end position="254"/>
    </location>
</feature>
<feature type="domain" description="EGF-like 2" evidence="4">
    <location>
        <begin position="256"/>
        <end position="301"/>
    </location>
</feature>
<feature type="domain" description="EGF-like 3" evidence="4">
    <location>
        <begin position="303"/>
        <end position="343"/>
    </location>
</feature>
<feature type="domain" description="Ig-like C2-type 2">
    <location>
        <begin position="349"/>
        <end position="440"/>
    </location>
</feature>
<feature type="domain" description="Fibronectin type-III 1" evidence="6">
    <location>
        <begin position="444"/>
        <end position="543"/>
    </location>
</feature>
<feature type="domain" description="Fibronectin type-III 2" evidence="6">
    <location>
        <begin position="546"/>
        <end position="638"/>
    </location>
</feature>
<feature type="domain" description="Fibronectin type-III 3" evidence="6">
    <location>
        <begin position="642"/>
        <end position="736"/>
    </location>
</feature>
<feature type="domain" description="Protein kinase" evidence="5">
    <location>
        <begin position="835"/>
        <end position="1114"/>
    </location>
</feature>
<feature type="active site" description="Proton acceptor" evidence="5 7">
    <location>
        <position position="975"/>
    </location>
</feature>
<feature type="binding site" evidence="5">
    <location>
        <begin position="841"/>
        <end position="849"/>
    </location>
    <ligand>
        <name>ATP</name>
        <dbReference type="ChEBI" id="CHEBI:30616"/>
    </ligand>
</feature>
<feature type="binding site" evidence="5">
    <location>
        <position position="866"/>
    </location>
    <ligand>
        <name>ATP</name>
        <dbReference type="ChEBI" id="CHEBI:30616"/>
    </ligand>
</feature>
<feature type="modified residue" description="Phosphotyrosine; by autocatalysis" evidence="1">
    <location>
        <position position="1003"/>
    </location>
</feature>
<feature type="glycosylation site" description="N-linked (GlcNAc...) asparagine" evidence="3">
    <location>
        <position position="81"/>
    </location>
</feature>
<feature type="glycosylation site" description="N-linked (GlcNAc...) asparagine" evidence="3">
    <location>
        <position position="159"/>
    </location>
</feature>
<feature type="glycosylation site" description="N-linked (GlcNAc...) asparagine" evidence="3">
    <location>
        <position position="501"/>
    </location>
</feature>
<feature type="glycosylation site" description="N-linked (GlcNAc...) asparagine" evidence="3">
    <location>
        <position position="592"/>
    </location>
</feature>
<feature type="glycosylation site" description="N-linked (GlcNAc...) asparagine" evidence="3">
    <location>
        <position position="705"/>
    </location>
</feature>
<feature type="disulfide bond" evidence="1">
    <location>
        <begin position="226"/>
        <end position="235"/>
    </location>
</feature>
<feature type="disulfide bond" evidence="1">
    <location>
        <begin position="229"/>
        <end position="242"/>
    </location>
</feature>
<feature type="disulfide bond" evidence="1">
    <location>
        <begin position="244"/>
        <end position="253"/>
    </location>
</feature>
<feature type="disulfide bond" evidence="1">
    <location>
        <begin position="266"/>
        <end position="276"/>
    </location>
</feature>
<feature type="disulfide bond" evidence="1">
    <location>
        <begin position="270"/>
        <end position="289"/>
    </location>
</feature>
<feature type="disulfide bond" evidence="1">
    <location>
        <begin position="291"/>
        <end position="300"/>
    </location>
</feature>
<feature type="disulfide bond" evidence="1">
    <location>
        <begin position="313"/>
        <end position="325"/>
    </location>
</feature>
<feature type="disulfide bond" evidence="1">
    <location>
        <begin position="319"/>
        <end position="331"/>
    </location>
</feature>
<feature type="disulfide bond" evidence="1">
    <location>
        <begin position="333"/>
        <end position="342"/>
    </location>
</feature>
<feature type="sequence conflict" description="In Ref. 1; CAA50556/CAA56739, 3; CAA52148 and 6; AAH46452." evidence="11" ref="1 3 6">
    <original>G</original>
    <variation>D</variation>
    <location>
        <position position="307"/>
    </location>
</feature>
<feature type="sequence conflict" description="In Ref. 1; CAA50556." evidence="11" ref="1">
    <original>R</original>
    <variation>L</variation>
    <location>
        <position position="599"/>
    </location>
</feature>
<feature type="sequence conflict" description="In Ref. 1; CAA50556/CAA56739, 3; CAA52148 and 6; AAH46452." evidence="11" ref="1 3 6">
    <original>G</original>
    <variation>D</variation>
    <location>
        <position position="741"/>
    </location>
</feature>
<comment type="function">
    <text evidence="1">Transmembrane tyrosine-protein kinase that may modulate TEK/TIE2 activity and contribute to the regulation of angiogenesis.</text>
</comment>
<comment type="catalytic activity">
    <reaction evidence="7">
        <text>L-tyrosyl-[protein] + ATP = O-phospho-L-tyrosyl-[protein] + ADP + H(+)</text>
        <dbReference type="Rhea" id="RHEA:10596"/>
        <dbReference type="Rhea" id="RHEA-COMP:10136"/>
        <dbReference type="Rhea" id="RHEA-COMP:20101"/>
        <dbReference type="ChEBI" id="CHEBI:15378"/>
        <dbReference type="ChEBI" id="CHEBI:30616"/>
        <dbReference type="ChEBI" id="CHEBI:46858"/>
        <dbReference type="ChEBI" id="CHEBI:61978"/>
        <dbReference type="ChEBI" id="CHEBI:456216"/>
        <dbReference type="EC" id="2.7.10.1"/>
    </reaction>
</comment>
<comment type="subunit">
    <text evidence="2">Heterodimer with TEK/TIE2 (By similarity). Interacts with SVEP1 (via C-terminus) (By similarity).</text>
</comment>
<comment type="subcellular location">
    <subcellularLocation>
        <location evidence="1">Cell membrane</location>
        <topology evidence="1">Single-pass type I membrane protein</topology>
    </subcellularLocation>
</comment>
<comment type="tissue specificity">
    <text evidence="9">Specifically expressed in developing vascular endothelial cells. Abundantly expressed in lung and heart, moderately in brain, liver and kidney, and weakly in thymus, spleen and testis.</text>
</comment>
<comment type="developmental stage">
    <text evidence="8 10">Expressed in dermal lymphatic endothelial cells at 16.5 and 18.5 dpc (at protein level) (PubMed:28179430). Expressed in the endocardium, dorsal aorta and maternal decidual blood vessel at 8.5 dpc (PubMed:8415706).</text>
</comment>
<comment type="PTM">
    <text evidence="1">Phosphorylated on tyrosine residues in response to ANGPT1, most likely by TEK/TIE2.</text>
</comment>
<comment type="similarity">
    <text evidence="5">Belongs to the protein kinase superfamily. Tyr protein kinase family. Tie subfamily.</text>
</comment>
<reference key="1">
    <citation type="journal article" date="1993" name="Proc. Natl. Acad. Sci. U.S.A.">
        <title>Tie-1 and tie-2 define another class of putative receptor tyrosine kinase genes expressed in early embryonic vascular system.</title>
        <authorList>
            <person name="Sato T.N."/>
            <person name="Qin Y."/>
            <person name="Kozak C.A."/>
            <person name="Andus K.L."/>
        </authorList>
    </citation>
    <scope>NUCLEOTIDE SEQUENCE [MRNA]</scope>
    <scope>DEVELOPMENTAL STAGE</scope>
    <source>
        <strain>BALB/cJ</strain>
        <tissue>Lung</tissue>
    </source>
</reference>
<reference key="2">
    <citation type="submission" date="1994-06" db="EMBL/GenBank/DDBJ databases">
        <authorList>
            <person name="Krivsov A.V."/>
            <person name="Ershler M.A."/>
            <person name="Visser J.W.M."/>
            <person name="Belyavsky A.V."/>
        </authorList>
    </citation>
    <scope>NUCLEOTIDE SEQUENCE</scope>
    <source>
        <strain>BALB/cJ</strain>
        <tissue>Bone marrow</tissue>
    </source>
</reference>
<reference key="3">
    <citation type="journal article" date="1993" name="Biochem. Biophys. Res. Commun.">
        <title>Molecular cloning and characterization of mouse TIE and TEK receptor tyrosine kinase genes and their expression in hematopoietic stem cells.</title>
        <authorList>
            <person name="Iwama A."/>
            <person name="Hamaguchi I."/>
            <person name="Hashiyama M."/>
            <person name="Murayama Y."/>
            <person name="Yasunaga K."/>
            <person name="Suda T."/>
        </authorList>
    </citation>
    <scope>NUCLEOTIDE SEQUENCE [MRNA]</scope>
    <scope>TISSUE SPECIFICITY</scope>
    <source>
        <strain>BALB/cJ</strain>
        <tissue>Fetal liver</tissue>
    </source>
</reference>
<reference key="4">
    <citation type="journal article" date="2005" name="Science">
        <title>The transcriptional landscape of the mammalian genome.</title>
        <authorList>
            <person name="Carninci P."/>
            <person name="Kasukawa T."/>
            <person name="Katayama S."/>
            <person name="Gough J."/>
            <person name="Frith M.C."/>
            <person name="Maeda N."/>
            <person name="Oyama R."/>
            <person name="Ravasi T."/>
            <person name="Lenhard B."/>
            <person name="Wells C."/>
            <person name="Kodzius R."/>
            <person name="Shimokawa K."/>
            <person name="Bajic V.B."/>
            <person name="Brenner S.E."/>
            <person name="Batalov S."/>
            <person name="Forrest A.R."/>
            <person name="Zavolan M."/>
            <person name="Davis M.J."/>
            <person name="Wilming L.G."/>
            <person name="Aidinis V."/>
            <person name="Allen J.E."/>
            <person name="Ambesi-Impiombato A."/>
            <person name="Apweiler R."/>
            <person name="Aturaliya R.N."/>
            <person name="Bailey T.L."/>
            <person name="Bansal M."/>
            <person name="Baxter L."/>
            <person name="Beisel K.W."/>
            <person name="Bersano T."/>
            <person name="Bono H."/>
            <person name="Chalk A.M."/>
            <person name="Chiu K.P."/>
            <person name="Choudhary V."/>
            <person name="Christoffels A."/>
            <person name="Clutterbuck D.R."/>
            <person name="Crowe M.L."/>
            <person name="Dalla E."/>
            <person name="Dalrymple B.P."/>
            <person name="de Bono B."/>
            <person name="Della Gatta G."/>
            <person name="di Bernardo D."/>
            <person name="Down T."/>
            <person name="Engstrom P."/>
            <person name="Fagiolini M."/>
            <person name="Faulkner G."/>
            <person name="Fletcher C.F."/>
            <person name="Fukushima T."/>
            <person name="Furuno M."/>
            <person name="Futaki S."/>
            <person name="Gariboldi M."/>
            <person name="Georgii-Hemming P."/>
            <person name="Gingeras T.R."/>
            <person name="Gojobori T."/>
            <person name="Green R.E."/>
            <person name="Gustincich S."/>
            <person name="Harbers M."/>
            <person name="Hayashi Y."/>
            <person name="Hensch T.K."/>
            <person name="Hirokawa N."/>
            <person name="Hill D."/>
            <person name="Huminiecki L."/>
            <person name="Iacono M."/>
            <person name="Ikeo K."/>
            <person name="Iwama A."/>
            <person name="Ishikawa T."/>
            <person name="Jakt M."/>
            <person name="Kanapin A."/>
            <person name="Katoh M."/>
            <person name="Kawasawa Y."/>
            <person name="Kelso J."/>
            <person name="Kitamura H."/>
            <person name="Kitano H."/>
            <person name="Kollias G."/>
            <person name="Krishnan S.P."/>
            <person name="Kruger A."/>
            <person name="Kummerfeld S.K."/>
            <person name="Kurochkin I.V."/>
            <person name="Lareau L.F."/>
            <person name="Lazarevic D."/>
            <person name="Lipovich L."/>
            <person name="Liu J."/>
            <person name="Liuni S."/>
            <person name="McWilliam S."/>
            <person name="Madan Babu M."/>
            <person name="Madera M."/>
            <person name="Marchionni L."/>
            <person name="Matsuda H."/>
            <person name="Matsuzawa S."/>
            <person name="Miki H."/>
            <person name="Mignone F."/>
            <person name="Miyake S."/>
            <person name="Morris K."/>
            <person name="Mottagui-Tabar S."/>
            <person name="Mulder N."/>
            <person name="Nakano N."/>
            <person name="Nakauchi H."/>
            <person name="Ng P."/>
            <person name="Nilsson R."/>
            <person name="Nishiguchi S."/>
            <person name="Nishikawa S."/>
            <person name="Nori F."/>
            <person name="Ohara O."/>
            <person name="Okazaki Y."/>
            <person name="Orlando V."/>
            <person name="Pang K.C."/>
            <person name="Pavan W.J."/>
            <person name="Pavesi G."/>
            <person name="Pesole G."/>
            <person name="Petrovsky N."/>
            <person name="Piazza S."/>
            <person name="Reed J."/>
            <person name="Reid J.F."/>
            <person name="Ring B.Z."/>
            <person name="Ringwald M."/>
            <person name="Rost B."/>
            <person name="Ruan Y."/>
            <person name="Salzberg S.L."/>
            <person name="Sandelin A."/>
            <person name="Schneider C."/>
            <person name="Schoenbach C."/>
            <person name="Sekiguchi K."/>
            <person name="Semple C.A."/>
            <person name="Seno S."/>
            <person name="Sessa L."/>
            <person name="Sheng Y."/>
            <person name="Shibata Y."/>
            <person name="Shimada H."/>
            <person name="Shimada K."/>
            <person name="Silva D."/>
            <person name="Sinclair B."/>
            <person name="Sperling S."/>
            <person name="Stupka E."/>
            <person name="Sugiura K."/>
            <person name="Sultana R."/>
            <person name="Takenaka Y."/>
            <person name="Taki K."/>
            <person name="Tammoja K."/>
            <person name="Tan S.L."/>
            <person name="Tang S."/>
            <person name="Taylor M.S."/>
            <person name="Tegner J."/>
            <person name="Teichmann S.A."/>
            <person name="Ueda H.R."/>
            <person name="van Nimwegen E."/>
            <person name="Verardo R."/>
            <person name="Wei C.L."/>
            <person name="Yagi K."/>
            <person name="Yamanishi H."/>
            <person name="Zabarovsky E."/>
            <person name="Zhu S."/>
            <person name="Zimmer A."/>
            <person name="Hide W."/>
            <person name="Bult C."/>
            <person name="Grimmond S.M."/>
            <person name="Teasdale R.D."/>
            <person name="Liu E.T."/>
            <person name="Brusic V."/>
            <person name="Quackenbush J."/>
            <person name="Wahlestedt C."/>
            <person name="Mattick J.S."/>
            <person name="Hume D.A."/>
            <person name="Kai C."/>
            <person name="Sasaki D."/>
            <person name="Tomaru Y."/>
            <person name="Fukuda S."/>
            <person name="Kanamori-Katayama M."/>
            <person name="Suzuki M."/>
            <person name="Aoki J."/>
            <person name="Arakawa T."/>
            <person name="Iida J."/>
            <person name="Imamura K."/>
            <person name="Itoh M."/>
            <person name="Kato T."/>
            <person name="Kawaji H."/>
            <person name="Kawagashira N."/>
            <person name="Kawashima T."/>
            <person name="Kojima M."/>
            <person name="Kondo S."/>
            <person name="Konno H."/>
            <person name="Nakano K."/>
            <person name="Ninomiya N."/>
            <person name="Nishio T."/>
            <person name="Okada M."/>
            <person name="Plessy C."/>
            <person name="Shibata K."/>
            <person name="Shiraki T."/>
            <person name="Suzuki S."/>
            <person name="Tagami M."/>
            <person name="Waki K."/>
            <person name="Watahiki A."/>
            <person name="Okamura-Oho Y."/>
            <person name="Suzuki H."/>
            <person name="Kawai J."/>
            <person name="Hayashizaki Y."/>
        </authorList>
    </citation>
    <scope>NUCLEOTIDE SEQUENCE [LARGE SCALE MRNA]</scope>
    <source>
        <strain>C57BL/6J</strain>
        <tissue>Heart</tissue>
        <tissue>Lung</tissue>
    </source>
</reference>
<reference key="5">
    <citation type="journal article" date="2009" name="PLoS Biol.">
        <title>Lineage-specific biology revealed by a finished genome assembly of the mouse.</title>
        <authorList>
            <person name="Church D.M."/>
            <person name="Goodstadt L."/>
            <person name="Hillier L.W."/>
            <person name="Zody M.C."/>
            <person name="Goldstein S."/>
            <person name="She X."/>
            <person name="Bult C.J."/>
            <person name="Agarwala R."/>
            <person name="Cherry J.L."/>
            <person name="DiCuccio M."/>
            <person name="Hlavina W."/>
            <person name="Kapustin Y."/>
            <person name="Meric P."/>
            <person name="Maglott D."/>
            <person name="Birtle Z."/>
            <person name="Marques A.C."/>
            <person name="Graves T."/>
            <person name="Zhou S."/>
            <person name="Teague B."/>
            <person name="Potamousis K."/>
            <person name="Churas C."/>
            <person name="Place M."/>
            <person name="Herschleb J."/>
            <person name="Runnheim R."/>
            <person name="Forrest D."/>
            <person name="Amos-Landgraf J."/>
            <person name="Schwartz D.C."/>
            <person name="Cheng Z."/>
            <person name="Lindblad-Toh K."/>
            <person name="Eichler E.E."/>
            <person name="Ponting C.P."/>
        </authorList>
    </citation>
    <scope>NUCLEOTIDE SEQUENCE [LARGE SCALE GENOMIC DNA]</scope>
    <source>
        <strain>C57BL/6J</strain>
    </source>
</reference>
<reference key="6">
    <citation type="journal article" date="2004" name="Genome Res.">
        <title>The status, quality, and expansion of the NIH full-length cDNA project: the Mammalian Gene Collection (MGC).</title>
        <authorList>
            <consortium name="The MGC Project Team"/>
        </authorList>
    </citation>
    <scope>NUCLEOTIDE SEQUENCE [LARGE SCALE MRNA]</scope>
    <source>
        <strain>FVB/N</strain>
        <tissue>Liver</tissue>
    </source>
</reference>
<reference key="7">
    <citation type="journal article" date="1995" name="Blood">
        <title>Endothelial-specific gene expression directed by the tie gene promoter in vivo.</title>
        <authorList>
            <person name="Korhonen J."/>
            <person name="Lahtinen I."/>
            <person name="Halmekyto M."/>
            <person name="Alhonen L."/>
            <person name="Janne J."/>
            <person name="Dumont D."/>
            <person name="Alitalo K."/>
        </authorList>
    </citation>
    <scope>NUCLEOTIDE SEQUENCE [GENOMIC DNA] OF 1-19</scope>
    <source>
        <strain>129/Sv</strain>
        <tissue>Liver</tissue>
    </source>
</reference>
<reference key="8">
    <citation type="journal article" date="1992" name="Blood">
        <title>Enhanced expression of the tie receptor tyrosine kinase in endothelial cells during neovascularization.</title>
        <authorList>
            <person name="Korhonen J."/>
            <person name="Partanen J."/>
            <person name="Armstrong E."/>
            <person name="Vaahtokari A."/>
            <person name="Elenius K."/>
            <person name="Jalkanen M."/>
            <person name="Alitalo K."/>
        </authorList>
    </citation>
    <scope>NUCLEOTIDE SEQUENCE OF 221-352 AND 740-890</scope>
</reference>
<reference key="9">
    <citation type="journal article" date="2010" name="Cell">
        <title>A tissue-specific atlas of mouse protein phosphorylation and expression.</title>
        <authorList>
            <person name="Huttlin E.L."/>
            <person name="Jedrychowski M.P."/>
            <person name="Elias J.E."/>
            <person name="Goswami T."/>
            <person name="Rad R."/>
            <person name="Beausoleil S.A."/>
            <person name="Villen J."/>
            <person name="Haas W."/>
            <person name="Sowa M.E."/>
            <person name="Gygi S.P."/>
        </authorList>
    </citation>
    <scope>IDENTIFICATION BY MASS SPECTROMETRY [LARGE SCALE ANALYSIS]</scope>
    <source>
        <tissue>Lung</tissue>
    </source>
</reference>
<reference key="10">
    <citation type="journal article" date="2017" name="Circ. Res.">
        <title>Polydom Is an Extracellular Matrix Protein Involved in Lymphatic Vessel Remodeling.</title>
        <authorList>
            <person name="Morooka N."/>
            <person name="Futaki S."/>
            <person name="Sato-Nishiuchi R."/>
            <person name="Nishino M."/>
            <person name="Totani Y."/>
            <person name="Shimono C."/>
            <person name="Nakano I."/>
            <person name="Nakajima H."/>
            <person name="Mochizuki N."/>
            <person name="Sekiguchi K."/>
        </authorList>
    </citation>
    <scope>DEVELOPMENTAL STAGE</scope>
</reference>
<dbReference type="EC" id="2.7.10.1"/>
<dbReference type="EMBL" id="X71425">
    <property type="protein sequence ID" value="CAA50556.1"/>
    <property type="molecule type" value="mRNA"/>
</dbReference>
<dbReference type="EMBL" id="X80764">
    <property type="protein sequence ID" value="CAA56739.1"/>
    <property type="molecule type" value="mRNA"/>
</dbReference>
<dbReference type="EMBL" id="X73960">
    <property type="protein sequence ID" value="CAA52148.1"/>
    <property type="molecule type" value="mRNA"/>
</dbReference>
<dbReference type="EMBL" id="AK052192">
    <property type="protein sequence ID" value="BAC34876.1"/>
    <property type="molecule type" value="mRNA"/>
</dbReference>
<dbReference type="EMBL" id="AK052413">
    <property type="protein sequence ID" value="BAC34979.1"/>
    <property type="molecule type" value="mRNA"/>
</dbReference>
<dbReference type="EMBL" id="AL627212">
    <property type="status" value="NOT_ANNOTATED_CDS"/>
    <property type="molecule type" value="Genomic_DNA"/>
</dbReference>
<dbReference type="EMBL" id="BC046452">
    <property type="protein sequence ID" value="AAH46452.2"/>
    <property type="molecule type" value="mRNA"/>
</dbReference>
<dbReference type="EMBL" id="S79346">
    <property type="status" value="NOT_ANNOTATED_CDS"/>
    <property type="molecule type" value="Genomic_DNA"/>
</dbReference>
<dbReference type="CCDS" id="CCDS18553.1"/>
<dbReference type="PIR" id="JN0711">
    <property type="entry name" value="JN0711"/>
</dbReference>
<dbReference type="RefSeq" id="NP_035717.2">
    <property type="nucleotide sequence ID" value="NM_011587.2"/>
</dbReference>
<dbReference type="SMR" id="Q06806"/>
<dbReference type="CORUM" id="Q06806"/>
<dbReference type="FunCoup" id="Q06806">
    <property type="interactions" value="185"/>
</dbReference>
<dbReference type="IntAct" id="Q06806">
    <property type="interactions" value="1"/>
</dbReference>
<dbReference type="MINT" id="Q06806"/>
<dbReference type="STRING" id="10090.ENSMUSP00000037129"/>
<dbReference type="BindingDB" id="Q06806"/>
<dbReference type="ChEMBL" id="CHEMBL2034800"/>
<dbReference type="GlyCosmos" id="Q06806">
    <property type="glycosylation" value="5 sites, No reported glycans"/>
</dbReference>
<dbReference type="GlyGen" id="Q06806">
    <property type="glycosylation" value="5 sites, 2 N-linked glycans (2 sites)"/>
</dbReference>
<dbReference type="iPTMnet" id="Q06806"/>
<dbReference type="PhosphoSitePlus" id="Q06806"/>
<dbReference type="CPTAC" id="non-CPTAC-3623"/>
<dbReference type="PaxDb" id="10090-ENSMUSP00000037129"/>
<dbReference type="PeptideAtlas" id="Q06806"/>
<dbReference type="ProteomicsDB" id="259025"/>
<dbReference type="Antibodypedia" id="32289">
    <property type="antibodies" value="738 antibodies from 39 providers"/>
</dbReference>
<dbReference type="DNASU" id="21846"/>
<dbReference type="Ensembl" id="ENSMUST00000047421.6">
    <property type="protein sequence ID" value="ENSMUSP00000037129.6"/>
    <property type="gene ID" value="ENSMUSG00000033191.15"/>
</dbReference>
<dbReference type="GeneID" id="21846"/>
<dbReference type="KEGG" id="mmu:21846"/>
<dbReference type="UCSC" id="uc008ukh.1">
    <property type="organism name" value="mouse"/>
</dbReference>
<dbReference type="AGR" id="MGI:99906"/>
<dbReference type="CTD" id="7075"/>
<dbReference type="MGI" id="MGI:99906">
    <property type="gene designation" value="Tie1"/>
</dbReference>
<dbReference type="VEuPathDB" id="HostDB:ENSMUSG00000033191"/>
<dbReference type="eggNOG" id="KOG0200">
    <property type="taxonomic scope" value="Eukaryota"/>
</dbReference>
<dbReference type="GeneTree" id="ENSGT00940000157693"/>
<dbReference type="HOGENOM" id="CLU_008888_0_0_1"/>
<dbReference type="InParanoid" id="Q06806"/>
<dbReference type="OMA" id="AKVWWRL"/>
<dbReference type="OrthoDB" id="1668230at2759"/>
<dbReference type="PhylomeDB" id="Q06806"/>
<dbReference type="TreeFam" id="TF317568"/>
<dbReference type="BRENDA" id="2.7.10.1">
    <property type="organism ID" value="3474"/>
</dbReference>
<dbReference type="BioGRID-ORCS" id="21846">
    <property type="hits" value="4 hits in 80 CRISPR screens"/>
</dbReference>
<dbReference type="ChiTaRS" id="Tie1">
    <property type="organism name" value="mouse"/>
</dbReference>
<dbReference type="PRO" id="PR:Q06806"/>
<dbReference type="Proteomes" id="UP000000589">
    <property type="component" value="Chromosome 4"/>
</dbReference>
<dbReference type="RNAct" id="Q06806">
    <property type="molecule type" value="protein"/>
</dbReference>
<dbReference type="Bgee" id="ENSMUSG00000033191">
    <property type="expression patterns" value="Expressed in cardiac muscle of left ventricle and 198 other cell types or tissues"/>
</dbReference>
<dbReference type="ExpressionAtlas" id="Q06806">
    <property type="expression patterns" value="baseline and differential"/>
</dbReference>
<dbReference type="GO" id="GO:0016020">
    <property type="term" value="C:membrane"/>
    <property type="evidence" value="ECO:0000255"/>
    <property type="project" value="MGI"/>
</dbReference>
<dbReference type="GO" id="GO:0005886">
    <property type="term" value="C:plasma membrane"/>
    <property type="evidence" value="ECO:0000314"/>
    <property type="project" value="MGI"/>
</dbReference>
<dbReference type="GO" id="GO:0005524">
    <property type="term" value="F:ATP binding"/>
    <property type="evidence" value="ECO:0007669"/>
    <property type="project" value="UniProtKB-KW"/>
</dbReference>
<dbReference type="GO" id="GO:0004714">
    <property type="term" value="F:transmembrane receptor protein tyrosine kinase activity"/>
    <property type="evidence" value="ECO:0007669"/>
    <property type="project" value="UniProtKB-EC"/>
</dbReference>
<dbReference type="GO" id="GO:0001525">
    <property type="term" value="P:angiogenesis"/>
    <property type="evidence" value="ECO:0007669"/>
    <property type="project" value="UniProtKB-KW"/>
</dbReference>
<dbReference type="GO" id="GO:0003180">
    <property type="term" value="P:aortic valve morphogenesis"/>
    <property type="evidence" value="ECO:0000315"/>
    <property type="project" value="BHF-UCL"/>
</dbReference>
<dbReference type="GO" id="GO:0001568">
    <property type="term" value="P:blood vessel development"/>
    <property type="evidence" value="ECO:0000315"/>
    <property type="project" value="MGI"/>
</dbReference>
<dbReference type="GO" id="GO:0060854">
    <property type="term" value="P:branching involved in lymph vessel morphogenesis"/>
    <property type="evidence" value="ECO:0000315"/>
    <property type="project" value="BHF-UCL"/>
</dbReference>
<dbReference type="GO" id="GO:0001701">
    <property type="term" value="P:in utero embryonic development"/>
    <property type="evidence" value="ECO:0000316"/>
    <property type="project" value="MGI"/>
</dbReference>
<dbReference type="GO" id="GO:0060836">
    <property type="term" value="P:lymphatic endothelial cell differentiation"/>
    <property type="evidence" value="ECO:0000315"/>
    <property type="project" value="BHF-UCL"/>
</dbReference>
<dbReference type="GO" id="GO:0016525">
    <property type="term" value="P:negative regulation of angiogenesis"/>
    <property type="evidence" value="ECO:0000315"/>
    <property type="project" value="MGI"/>
</dbReference>
<dbReference type="GO" id="GO:0030336">
    <property type="term" value="P:negative regulation of cell migration"/>
    <property type="evidence" value="ECO:0000315"/>
    <property type="project" value="MGI"/>
</dbReference>
<dbReference type="GO" id="GO:0045026">
    <property type="term" value="P:plasma membrane fusion"/>
    <property type="evidence" value="ECO:0000315"/>
    <property type="project" value="MGI"/>
</dbReference>
<dbReference type="GO" id="GO:0001936">
    <property type="term" value="P:regulation of endothelial cell proliferation"/>
    <property type="evidence" value="ECO:0000315"/>
    <property type="project" value="BHF-UCL"/>
</dbReference>
<dbReference type="GO" id="GO:1901201">
    <property type="term" value="P:regulation of extracellular matrix assembly"/>
    <property type="evidence" value="ECO:0000315"/>
    <property type="project" value="BHF-UCL"/>
</dbReference>
<dbReference type="GO" id="GO:0032526">
    <property type="term" value="P:response to retinoic acid"/>
    <property type="evidence" value="ECO:0000314"/>
    <property type="project" value="BHF-UCL"/>
</dbReference>
<dbReference type="GO" id="GO:0048771">
    <property type="term" value="P:tissue remodeling"/>
    <property type="evidence" value="ECO:0000315"/>
    <property type="project" value="BHF-UCL"/>
</dbReference>
<dbReference type="GO" id="GO:0001570">
    <property type="term" value="P:vasculogenesis"/>
    <property type="evidence" value="ECO:0007669"/>
    <property type="project" value="Ensembl"/>
</dbReference>
<dbReference type="CDD" id="cd00054">
    <property type="entry name" value="EGF_CA"/>
    <property type="match status" value="1"/>
</dbReference>
<dbReference type="CDD" id="cd00055">
    <property type="entry name" value="EGF_Lam"/>
    <property type="match status" value="1"/>
</dbReference>
<dbReference type="CDD" id="cd00063">
    <property type="entry name" value="FN3"/>
    <property type="match status" value="3"/>
</dbReference>
<dbReference type="CDD" id="cd05089">
    <property type="entry name" value="PTKc_Tie1"/>
    <property type="match status" value="1"/>
</dbReference>
<dbReference type="FunFam" id="3.30.200.20:FF:000113">
    <property type="entry name" value="Putative tyrosine-protein kinase receptor Tie-1"/>
    <property type="match status" value="1"/>
</dbReference>
<dbReference type="FunFam" id="1.10.510.10:FF:000123">
    <property type="entry name" value="Tyrosine-protein kinase receptor Tie-1"/>
    <property type="match status" value="1"/>
</dbReference>
<dbReference type="FunFam" id="2.170.300.10:FF:000003">
    <property type="entry name" value="tyrosine-protein kinase receptor Tie-1 isoform X1"/>
    <property type="match status" value="1"/>
</dbReference>
<dbReference type="FunFam" id="2.60.40.10:FF:000591">
    <property type="entry name" value="tyrosine-protein kinase receptor Tie-1 isoform X1"/>
    <property type="match status" value="1"/>
</dbReference>
<dbReference type="FunFam" id="2.60.40.10:FF:000597">
    <property type="entry name" value="tyrosine-protein kinase receptor Tie-1 isoform X1"/>
    <property type="match status" value="1"/>
</dbReference>
<dbReference type="FunFam" id="2.60.40.10:FF:000583">
    <property type="entry name" value="tyrosine-protein kinase receptor Tie-1 isoform X2"/>
    <property type="match status" value="1"/>
</dbReference>
<dbReference type="FunFam" id="2.60.40.10:FF:000758">
    <property type="entry name" value="tyrosine-protein kinase receptor Tie-1 isoform X2"/>
    <property type="match status" value="1"/>
</dbReference>
<dbReference type="Gene3D" id="2.60.40.10">
    <property type="entry name" value="Immunoglobulins"/>
    <property type="match status" value="5"/>
</dbReference>
<dbReference type="Gene3D" id="3.30.200.20">
    <property type="entry name" value="Phosphorylase Kinase, domain 1"/>
    <property type="match status" value="1"/>
</dbReference>
<dbReference type="Gene3D" id="2.170.300.10">
    <property type="entry name" value="Tie2 ligand-binding domain superfamily"/>
    <property type="match status" value="1"/>
</dbReference>
<dbReference type="Gene3D" id="1.10.510.10">
    <property type="entry name" value="Transferase(Phosphotransferase) domain 1"/>
    <property type="match status" value="1"/>
</dbReference>
<dbReference type="InterPro" id="IPR000742">
    <property type="entry name" value="EGF-like_dom"/>
</dbReference>
<dbReference type="InterPro" id="IPR003961">
    <property type="entry name" value="FN3_dom"/>
</dbReference>
<dbReference type="InterPro" id="IPR036116">
    <property type="entry name" value="FN3_sf"/>
</dbReference>
<dbReference type="InterPro" id="IPR007110">
    <property type="entry name" value="Ig-like_dom"/>
</dbReference>
<dbReference type="InterPro" id="IPR036179">
    <property type="entry name" value="Ig-like_dom_sf"/>
</dbReference>
<dbReference type="InterPro" id="IPR013783">
    <property type="entry name" value="Ig-like_fold"/>
</dbReference>
<dbReference type="InterPro" id="IPR003599">
    <property type="entry name" value="Ig_sub"/>
</dbReference>
<dbReference type="InterPro" id="IPR013151">
    <property type="entry name" value="Immunoglobulin_dom"/>
</dbReference>
<dbReference type="InterPro" id="IPR011009">
    <property type="entry name" value="Kinase-like_dom_sf"/>
</dbReference>
<dbReference type="InterPro" id="IPR002049">
    <property type="entry name" value="LE_dom"/>
</dbReference>
<dbReference type="InterPro" id="IPR000719">
    <property type="entry name" value="Prot_kinase_dom"/>
</dbReference>
<dbReference type="InterPro" id="IPR017441">
    <property type="entry name" value="Protein_kinase_ATP_BS"/>
</dbReference>
<dbReference type="InterPro" id="IPR050122">
    <property type="entry name" value="RTK"/>
</dbReference>
<dbReference type="InterPro" id="IPR001245">
    <property type="entry name" value="Ser-Thr/Tyr_kinase_cat_dom"/>
</dbReference>
<dbReference type="InterPro" id="IPR008266">
    <property type="entry name" value="Tyr_kinase_AS"/>
</dbReference>
<dbReference type="InterPro" id="IPR020635">
    <property type="entry name" value="Tyr_kinase_cat_dom"/>
</dbReference>
<dbReference type="PANTHER" id="PTHR24416">
    <property type="entry name" value="TYROSINE-PROTEIN KINASE RECEPTOR"/>
    <property type="match status" value="1"/>
</dbReference>
<dbReference type="PANTHER" id="PTHR24416:SF341">
    <property type="entry name" value="TYROSINE-PROTEIN KINASE RECEPTOR TIE-1"/>
    <property type="match status" value="1"/>
</dbReference>
<dbReference type="Pfam" id="PF00041">
    <property type="entry name" value="fn3"/>
    <property type="match status" value="3"/>
</dbReference>
<dbReference type="Pfam" id="PF00047">
    <property type="entry name" value="ig"/>
    <property type="match status" value="2"/>
</dbReference>
<dbReference type="Pfam" id="PF07714">
    <property type="entry name" value="PK_Tyr_Ser-Thr"/>
    <property type="match status" value="1"/>
</dbReference>
<dbReference type="PRINTS" id="PR00109">
    <property type="entry name" value="TYRKINASE"/>
</dbReference>
<dbReference type="SMART" id="SM00181">
    <property type="entry name" value="EGF"/>
    <property type="match status" value="3"/>
</dbReference>
<dbReference type="SMART" id="SM00060">
    <property type="entry name" value="FN3"/>
    <property type="match status" value="3"/>
</dbReference>
<dbReference type="SMART" id="SM00409">
    <property type="entry name" value="IG"/>
    <property type="match status" value="2"/>
</dbReference>
<dbReference type="SMART" id="SM00219">
    <property type="entry name" value="TyrKc"/>
    <property type="match status" value="1"/>
</dbReference>
<dbReference type="SUPFAM" id="SSF49265">
    <property type="entry name" value="Fibronectin type III"/>
    <property type="match status" value="2"/>
</dbReference>
<dbReference type="SUPFAM" id="SSF48726">
    <property type="entry name" value="Immunoglobulin"/>
    <property type="match status" value="2"/>
</dbReference>
<dbReference type="SUPFAM" id="SSF56112">
    <property type="entry name" value="Protein kinase-like (PK-like)"/>
    <property type="match status" value="1"/>
</dbReference>
<dbReference type="PROSITE" id="PS00022">
    <property type="entry name" value="EGF_1"/>
    <property type="match status" value="3"/>
</dbReference>
<dbReference type="PROSITE" id="PS01186">
    <property type="entry name" value="EGF_2"/>
    <property type="match status" value="3"/>
</dbReference>
<dbReference type="PROSITE" id="PS50026">
    <property type="entry name" value="EGF_3"/>
    <property type="match status" value="3"/>
</dbReference>
<dbReference type="PROSITE" id="PS50853">
    <property type="entry name" value="FN3"/>
    <property type="match status" value="3"/>
</dbReference>
<dbReference type="PROSITE" id="PS50835">
    <property type="entry name" value="IG_LIKE"/>
    <property type="match status" value="1"/>
</dbReference>
<dbReference type="PROSITE" id="PS00107">
    <property type="entry name" value="PROTEIN_KINASE_ATP"/>
    <property type="match status" value="1"/>
</dbReference>
<dbReference type="PROSITE" id="PS50011">
    <property type="entry name" value="PROTEIN_KINASE_DOM"/>
    <property type="match status" value="1"/>
</dbReference>
<dbReference type="PROSITE" id="PS00109">
    <property type="entry name" value="PROTEIN_KINASE_TYR"/>
    <property type="match status" value="1"/>
</dbReference>
<proteinExistence type="evidence at protein level"/>
<protein>
    <recommendedName>
        <fullName>Tyrosine-protein kinase receptor Tie-1</fullName>
        <ecNumber>2.7.10.1</ecNumber>
    </recommendedName>
</protein>
<gene>
    <name type="primary">Tie1</name>
    <name type="synonym">Tie</name>
    <name type="synonym">Tie-1</name>
</gene>
<keyword id="KW-0037">Angiogenesis</keyword>
<keyword id="KW-0067">ATP-binding</keyword>
<keyword id="KW-1003">Cell membrane</keyword>
<keyword id="KW-1015">Disulfide bond</keyword>
<keyword id="KW-0245">EGF-like domain</keyword>
<keyword id="KW-0325">Glycoprotein</keyword>
<keyword id="KW-0393">Immunoglobulin domain</keyword>
<keyword id="KW-0418">Kinase</keyword>
<keyword id="KW-0472">Membrane</keyword>
<keyword id="KW-0547">Nucleotide-binding</keyword>
<keyword id="KW-0597">Phosphoprotein</keyword>
<keyword id="KW-0675">Receptor</keyword>
<keyword id="KW-1185">Reference proteome</keyword>
<keyword id="KW-0677">Repeat</keyword>
<keyword id="KW-0732">Signal</keyword>
<keyword id="KW-0808">Transferase</keyword>
<keyword id="KW-0812">Transmembrane</keyword>
<keyword id="KW-1133">Transmembrane helix</keyword>
<keyword id="KW-0829">Tyrosine-protein kinase</keyword>
<accession>Q06806</accession>
<accession>Q811F4</accession>
<accession>Q8BGI2</accession>